<dbReference type="EC" id="1.14.13.251" evidence="3"/>
<dbReference type="EMBL" id="CP000285">
    <property type="protein sequence ID" value="ABE58362.1"/>
    <property type="molecule type" value="Genomic_DNA"/>
</dbReference>
<dbReference type="RefSeq" id="WP_011506308.1">
    <property type="nucleotide sequence ID" value="NC_007963.1"/>
</dbReference>
<dbReference type="SMR" id="Q1QYU6"/>
<dbReference type="STRING" id="290398.Csal_1005"/>
<dbReference type="GeneID" id="95333760"/>
<dbReference type="KEGG" id="csa:Csal_1005"/>
<dbReference type="eggNOG" id="COG1018">
    <property type="taxonomic scope" value="Bacteria"/>
</dbReference>
<dbReference type="HOGENOM" id="CLU_003827_14_3_6"/>
<dbReference type="OrthoDB" id="9796486at2"/>
<dbReference type="Proteomes" id="UP000000239">
    <property type="component" value="Chromosome"/>
</dbReference>
<dbReference type="GO" id="GO:0051537">
    <property type="term" value="F:2 iron, 2 sulfur cluster binding"/>
    <property type="evidence" value="ECO:0007669"/>
    <property type="project" value="UniProtKB-KW"/>
</dbReference>
<dbReference type="GO" id="GO:0046872">
    <property type="term" value="F:metal ion binding"/>
    <property type="evidence" value="ECO:0007669"/>
    <property type="project" value="UniProtKB-KW"/>
</dbReference>
<dbReference type="GO" id="GO:0004497">
    <property type="term" value="F:monooxygenase activity"/>
    <property type="evidence" value="ECO:0007669"/>
    <property type="project" value="UniProtKB-KW"/>
</dbReference>
<dbReference type="CDD" id="cd00207">
    <property type="entry name" value="fer2"/>
    <property type="match status" value="1"/>
</dbReference>
<dbReference type="CDD" id="cd06215">
    <property type="entry name" value="FNR_iron_sulfur_binding_1"/>
    <property type="match status" value="1"/>
</dbReference>
<dbReference type="Gene3D" id="3.10.20.30">
    <property type="match status" value="1"/>
</dbReference>
<dbReference type="Gene3D" id="3.40.50.80">
    <property type="entry name" value="Nucleotide-binding domain of ferredoxin-NADP reductase (FNR) module"/>
    <property type="match status" value="1"/>
</dbReference>
<dbReference type="Gene3D" id="2.40.30.10">
    <property type="entry name" value="Translation factors"/>
    <property type="match status" value="1"/>
</dbReference>
<dbReference type="InterPro" id="IPR036010">
    <property type="entry name" value="2Fe-2S_ferredoxin-like_sf"/>
</dbReference>
<dbReference type="InterPro" id="IPR001041">
    <property type="entry name" value="2Fe-2S_ferredoxin-type"/>
</dbReference>
<dbReference type="InterPro" id="IPR006058">
    <property type="entry name" value="2Fe2S_fd_BS"/>
</dbReference>
<dbReference type="InterPro" id="IPR012675">
    <property type="entry name" value="Beta-grasp_dom_sf"/>
</dbReference>
<dbReference type="InterPro" id="IPR008333">
    <property type="entry name" value="Cbr1-like_FAD-bd_dom"/>
</dbReference>
<dbReference type="InterPro" id="IPR017927">
    <property type="entry name" value="FAD-bd_FR_type"/>
</dbReference>
<dbReference type="InterPro" id="IPR001709">
    <property type="entry name" value="Flavoprot_Pyr_Nucl_cyt_Rdtase"/>
</dbReference>
<dbReference type="InterPro" id="IPR039261">
    <property type="entry name" value="FNR_nucleotide-bd"/>
</dbReference>
<dbReference type="InterPro" id="IPR050415">
    <property type="entry name" value="MRET"/>
</dbReference>
<dbReference type="InterPro" id="IPR001433">
    <property type="entry name" value="OxRdtase_FAD/NAD-bd"/>
</dbReference>
<dbReference type="InterPro" id="IPR017938">
    <property type="entry name" value="Riboflavin_synthase-like_b-brl"/>
</dbReference>
<dbReference type="PANTHER" id="PTHR47354">
    <property type="entry name" value="NADH OXIDOREDUCTASE HCR"/>
    <property type="match status" value="1"/>
</dbReference>
<dbReference type="PANTHER" id="PTHR47354:SF6">
    <property type="entry name" value="NADH OXIDOREDUCTASE HCR"/>
    <property type="match status" value="1"/>
</dbReference>
<dbReference type="Pfam" id="PF00970">
    <property type="entry name" value="FAD_binding_6"/>
    <property type="match status" value="1"/>
</dbReference>
<dbReference type="Pfam" id="PF00111">
    <property type="entry name" value="Fer2"/>
    <property type="match status" value="1"/>
</dbReference>
<dbReference type="Pfam" id="PF00175">
    <property type="entry name" value="NAD_binding_1"/>
    <property type="match status" value="1"/>
</dbReference>
<dbReference type="PRINTS" id="PR00406">
    <property type="entry name" value="CYTB5RDTASE"/>
</dbReference>
<dbReference type="PRINTS" id="PR00371">
    <property type="entry name" value="FPNCR"/>
</dbReference>
<dbReference type="SUPFAM" id="SSF54292">
    <property type="entry name" value="2Fe-2S ferredoxin-like"/>
    <property type="match status" value="1"/>
</dbReference>
<dbReference type="SUPFAM" id="SSF52343">
    <property type="entry name" value="Ferredoxin reductase-like, C-terminal NADP-linked domain"/>
    <property type="match status" value="1"/>
</dbReference>
<dbReference type="SUPFAM" id="SSF63380">
    <property type="entry name" value="Riboflavin synthase domain-like"/>
    <property type="match status" value="1"/>
</dbReference>
<dbReference type="PROSITE" id="PS00197">
    <property type="entry name" value="2FE2S_FER_1"/>
    <property type="match status" value="1"/>
</dbReference>
<dbReference type="PROSITE" id="PS51085">
    <property type="entry name" value="2FE2S_FER_2"/>
    <property type="match status" value="1"/>
</dbReference>
<dbReference type="PROSITE" id="PS51384">
    <property type="entry name" value="FAD_FR"/>
    <property type="match status" value="1"/>
</dbReference>
<proteinExistence type="evidence at protein level"/>
<keyword id="KW-0001">2Fe-2S</keyword>
<keyword id="KW-0274">FAD</keyword>
<keyword id="KW-0285">Flavoprotein</keyword>
<keyword id="KW-0408">Iron</keyword>
<keyword id="KW-0411">Iron-sulfur</keyword>
<keyword id="KW-0479">Metal-binding</keyword>
<keyword id="KW-0503">Monooxygenase</keyword>
<keyword id="KW-0560">Oxidoreductase</keyword>
<keyword id="KW-1185">Reference proteome</keyword>
<accession>Q1QYU6</accession>
<evidence type="ECO:0000255" key="1">
    <source>
        <dbReference type="PROSITE-ProRule" id="PRU00465"/>
    </source>
</evidence>
<evidence type="ECO:0000255" key="2">
    <source>
        <dbReference type="PROSITE-ProRule" id="PRU00716"/>
    </source>
</evidence>
<evidence type="ECO:0000269" key="3">
    <source>
    </source>
</evidence>
<evidence type="ECO:0000303" key="4">
    <source>
    </source>
</evidence>
<evidence type="ECO:0000305" key="5"/>
<evidence type="ECO:0000312" key="6">
    <source>
        <dbReference type="EMBL" id="ABE58362.1"/>
    </source>
</evidence>
<reference key="1">
    <citation type="journal article" date="2011" name="Stand. Genomic Sci.">
        <title>Complete genome sequence of the halophilic and highly halotolerant Chromohalobacter salexigens type strain (1H11(T)).</title>
        <authorList>
            <person name="Copeland A."/>
            <person name="O'Connor K."/>
            <person name="Lucas S."/>
            <person name="Lapidus A."/>
            <person name="Berry K.W."/>
            <person name="Detter J.C."/>
            <person name="Del Rio T.G."/>
            <person name="Hammon N."/>
            <person name="Dalin E."/>
            <person name="Tice H."/>
            <person name="Pitluck S."/>
            <person name="Bruce D."/>
            <person name="Goodwin L."/>
            <person name="Han C."/>
            <person name="Tapia R."/>
            <person name="Saunders E."/>
            <person name="Schmutz J."/>
            <person name="Brettin T."/>
            <person name="Larimer F."/>
            <person name="Land M."/>
            <person name="Hauser L."/>
            <person name="Vargas C."/>
            <person name="Nieto J.J."/>
            <person name="Kyrpides N.C."/>
            <person name="Ivanova N."/>
            <person name="Goker M."/>
            <person name="Klenk H.P."/>
            <person name="Csonka L.N."/>
            <person name="Woyke T."/>
        </authorList>
    </citation>
    <scope>NUCLEOTIDE SEQUENCE [LARGE SCALE GENOMIC DNA]</scope>
    <source>
        <strain>ATCC BAA-138 / DSM 3043 / CIP 106854 / NCIMB 13768 / 1H11</strain>
    </source>
</reference>
<reference key="2">
    <citation type="journal article" date="2018" name="Appl. Environ. Microbiol.">
        <title>Glycine betaine monooxygenase, an unusual Rieske-type oxygenase system, catalyzes the oxidative N-demethylation of glycine betaine in Chromohalobacter salexigens DSM 3043.</title>
        <authorList>
            <person name="Shao Y.H."/>
            <person name="Guo L.Z."/>
            <person name="Zhang Y.Q."/>
            <person name="Yu H."/>
            <person name="Zhao B.S."/>
            <person name="Pang H.Q."/>
            <person name="Lu W.D."/>
        </authorList>
    </citation>
    <scope>FUNCTION</scope>
    <scope>CATALYTIC ACTIVITY</scope>
    <scope>COFACTOR</scope>
    <scope>BIOPHYSICOCHEMICAL PROPERTIES</scope>
    <scope>SUBUNIT</scope>
    <scope>DISRUPTION PHENOTYPE</scope>
    <source>
        <strain>ATCC BAA-138 / DSM 3043 / CIP 106854 / NCIMB 13768 / 1H11</strain>
    </source>
</reference>
<feature type="chain" id="PRO_0000459095" description="Glycine betaine monooxygenase reductase subunit">
    <location>
        <begin position="1"/>
        <end position="368"/>
    </location>
</feature>
<feature type="domain" description="FAD-binding FR-type" evidence="2">
    <location>
        <begin position="16"/>
        <end position="119"/>
    </location>
</feature>
<feature type="domain" description="2Fe-2S ferredoxin-type" evidence="1">
    <location>
        <begin position="284"/>
        <end position="368"/>
    </location>
</feature>
<feature type="binding site" evidence="1">
    <location>
        <position position="318"/>
    </location>
    <ligand>
        <name>[2Fe-2S] cluster</name>
        <dbReference type="ChEBI" id="CHEBI:190135"/>
    </ligand>
</feature>
<feature type="binding site" evidence="1">
    <location>
        <position position="323"/>
    </location>
    <ligand>
        <name>[2Fe-2S] cluster</name>
        <dbReference type="ChEBI" id="CHEBI:190135"/>
    </ligand>
</feature>
<feature type="binding site" evidence="1">
    <location>
        <position position="326"/>
    </location>
    <ligand>
        <name>[2Fe-2S] cluster</name>
        <dbReference type="ChEBI" id="CHEBI:190135"/>
    </ligand>
</feature>
<feature type="binding site" evidence="1">
    <location>
        <position position="356"/>
    </location>
    <ligand>
        <name>[2Fe-2S] cluster</name>
        <dbReference type="ChEBI" id="CHEBI:190135"/>
    </ligand>
</feature>
<gene>
    <name evidence="4" type="primary">bmoB</name>
    <name evidence="6" type="ordered locus">Csal_1005</name>
</gene>
<protein>
    <recommendedName>
        <fullName evidence="5">Glycine betaine monooxygenase reductase subunit</fullName>
        <shortName evidence="5">BMO reductase subunit</shortName>
        <shortName evidence="5">GB monooxygenase reductase subunit</shortName>
        <ecNumber evidence="3">1.14.13.251</ecNumber>
    </recommendedName>
    <alternativeName>
        <fullName evidence="4">BMO NADH-dependent flavine reductase component</fullName>
    </alternativeName>
</protein>
<organism>
    <name type="scientific">Chromohalobacter salexigens (strain ATCC BAA-138 / DSM 3043 / CIP 106854 / NCIMB 13768 / 1H11)</name>
    <dbReference type="NCBI Taxonomy" id="290398"/>
    <lineage>
        <taxon>Bacteria</taxon>
        <taxon>Pseudomonadati</taxon>
        <taxon>Pseudomonadota</taxon>
        <taxon>Gammaproteobacteria</taxon>
        <taxon>Oceanospirillales</taxon>
        <taxon>Halomonadaceae</taxon>
        <taxon>Chromohalobacter</taxon>
    </lineage>
</organism>
<comment type="function">
    <text evidence="3">Involved in degradation of glycine betaine (PubMed:29703733). Part of a Rieske-type oxygenase system that catalyzes the conversion of glycine betaine (GB) to dimethylglycine (DMG) (PubMed:29703733). This subunit is the ferredoxin reductase component of the system (PubMed:29703733). NADH is the preferred electron donor (PubMed:29703733).</text>
</comment>
<comment type="catalytic activity">
    <reaction evidence="3">
        <text>glycine betaine + NADH + O2 + H(+) = N,N-dimethylglycine + formaldehyde + NAD(+) + H2O</text>
        <dbReference type="Rhea" id="RHEA:45700"/>
        <dbReference type="ChEBI" id="CHEBI:15377"/>
        <dbReference type="ChEBI" id="CHEBI:15378"/>
        <dbReference type="ChEBI" id="CHEBI:15379"/>
        <dbReference type="ChEBI" id="CHEBI:16842"/>
        <dbReference type="ChEBI" id="CHEBI:17750"/>
        <dbReference type="ChEBI" id="CHEBI:57540"/>
        <dbReference type="ChEBI" id="CHEBI:57945"/>
        <dbReference type="ChEBI" id="CHEBI:58251"/>
        <dbReference type="EC" id="1.14.13.251"/>
    </reaction>
    <physiologicalReaction direction="left-to-right" evidence="3">
        <dbReference type="Rhea" id="RHEA:45701"/>
    </physiologicalReaction>
</comment>
<comment type="cofactor">
    <cofactor evidence="3">
        <name>FAD</name>
        <dbReference type="ChEBI" id="CHEBI:57692"/>
    </cofactor>
    <text evidence="3">Binds 1 FAD per subunit (PubMed:29703733). FAD is the native cofactor, but activity is slightly higher with FMN (PubMed:29703733).</text>
</comment>
<comment type="cofactor">
    <cofactor evidence="3">
        <name>[2Fe-2S] cluster</name>
        <dbReference type="ChEBI" id="CHEBI:190135"/>
    </cofactor>
    <text evidence="3">Binds 1 2Fe-2S cluster per subunit.</text>
</comment>
<comment type="biophysicochemical properties">
    <kinetics>
        <KM evidence="3">43.94 uM for NADH (for flavin reductase activity, with FAD as cosubstrate)</KM>
        <KM evidence="3">257.8 uM for NADPH (for flavin reductase activity, with FAD as cosubstrate)</KM>
        <KM evidence="3">6.03 uM for FAD (for flavin reductase activity, with NADH as cosubstrate)</KM>
        <KM evidence="3">17.31 uM for FMN (for flavin reductase activity, with NADH as cosubstrate)</KM>
        <KM evidence="3">111.83 uM for riboflavin (for flavin reductase activity, with NADH as cosubstrate)</KM>
        <Vmax evidence="3">1.25 umol/min/mg enzyme with NADH as substrate (for flavin reductase activity, with FAD as cosubstrate)</Vmax>
        <Vmax evidence="3">0.49 umol/min/mg enzyme with NADPH as substrate (for flavin reductase activity, with FAD as cosubstrate)</Vmax>
        <Vmax evidence="3">5.9 umol/min/mg enzyme with FAD as substrate (for flavin reductase activity, with NADH as cosubstrate)</Vmax>
        <Vmax evidence="3">6.79 umol/min/mg enzyme with FMN as substrate (for flavin reductase activity, with NADH as cosubstrate)</Vmax>
        <Vmax evidence="3">2.32 umol/min/mg enzyme with riboflavin as substrate (for flavin reductase activity, with NADH as cosubstrate)</Vmax>
        <text evidence="3">kcat is 0.90 sec(-1) with NADH as substrate (for flavin reductase activity, with FAD as cosubstrate). kcat is 0.35 sec(-1) with NADPH as substrate (for flavin reductase activity, with FAD as cosubstrate). kcat is 4.25 sec(-1) with FAD as substrate (for flavin reductase activity, with NADH as cosubstrate). kcat is 4.89 sec(-1) with FMN as substrate (for flavin reductase activity, with NADH as cosubstrate). kcat is 1.67 sec(-1) with riboflavin as substrate (for flavin reductase activity, with NADH as cosubstrate).</text>
    </kinetics>
    <phDependence>
        <text>Optimum pH is 7.5 (for flavin reductase activity).</text>
    </phDependence>
</comment>
<comment type="subunit">
    <text evidence="3">Monomer (PubMed:29703733). The system is composed of an oxygenase subunit (BmoA) and a reductase subunit (BmoB) (PubMed:29703733). Maximal specific activity is obtained when the ratio of BmoA to BmoB is 5:1 (PubMed:29703733).</text>
</comment>
<comment type="disruption phenotype">
    <text evidence="3">Can use glucose or dimethylglycine as the sole carbon source, but is incapable of growth on glycine betaine as the sole source of carbon.</text>
</comment>
<comment type="similarity">
    <text evidence="5">In the N-terminal section; belongs to the FAD-binding oxidoreductase type 6 family.</text>
</comment>
<name>GBMOR_CHRSD</name>
<sequence>MTQNFFNPVTTQTWTNGRHNVRCVKVIQETWDVRTFCFMADQPVLFFFKPGQFVTLELEIDGEAVMRSYTISSSPSVPYSFSITVKRLPDGRVSNWLHENLQVGSELVVHGPVGDFNVIDYPADKVLMLSGGVGVTPLMSMTRWFFDTNANVDLQFVHSARTPRDIIFHRELEHIFSRIPDFRLHIVCERGDESGEPWAGFRGYLAQAMLELMVPDYLEREIFCCGPTPYMKAVKQVLKSNGFDMSHYHEESFGATPADVRADVEELAEQAEAEMEAVDTADMLQVEFSNSGKSIRIMPEETVHAAAAKLGLHIPKACGMGICGTCKVKKLAGEVTMEHNGGITEEDEADGYILSCCSTPKSHVAIEF</sequence>